<dbReference type="EC" id="3.2.2.-" evidence="1"/>
<dbReference type="EMBL" id="CP000099">
    <property type="protein sequence ID" value="AAZ69715.1"/>
    <property type="molecule type" value="Genomic_DNA"/>
</dbReference>
<dbReference type="SMR" id="Q46EH7"/>
<dbReference type="STRING" id="269797.Mbar_A0737"/>
<dbReference type="PaxDb" id="269797-Mbar_A0737"/>
<dbReference type="KEGG" id="mba:Mbar_A0737"/>
<dbReference type="eggNOG" id="arCOG04947">
    <property type="taxonomic scope" value="Archaea"/>
</dbReference>
<dbReference type="HOGENOM" id="CLU_094865_0_1_2"/>
<dbReference type="OrthoDB" id="134618at2157"/>
<dbReference type="GO" id="GO:0097507">
    <property type="term" value="F:hypoxanthine DNA N-glycosylase activity"/>
    <property type="evidence" value="ECO:0000314"/>
    <property type="project" value="UniProtKB"/>
</dbReference>
<dbReference type="GO" id="GO:0006281">
    <property type="term" value="P:DNA repair"/>
    <property type="evidence" value="ECO:0000314"/>
    <property type="project" value="UniProtKB"/>
</dbReference>
<dbReference type="CDD" id="cd10032">
    <property type="entry name" value="UDG-F6_HDG"/>
    <property type="match status" value="1"/>
</dbReference>
<dbReference type="FunFam" id="3.40.470.10:FF:000019">
    <property type="entry name" value="Hypoxanthine DNA glycosylase"/>
    <property type="match status" value="1"/>
</dbReference>
<dbReference type="Gene3D" id="3.40.470.10">
    <property type="entry name" value="Uracil-DNA glycosylase-like domain"/>
    <property type="match status" value="1"/>
</dbReference>
<dbReference type="InterPro" id="IPR026353">
    <property type="entry name" value="Hypoxan-DNA_Glyclase"/>
</dbReference>
<dbReference type="InterPro" id="IPR005122">
    <property type="entry name" value="Uracil-DNA_glycosylase-like"/>
</dbReference>
<dbReference type="InterPro" id="IPR036895">
    <property type="entry name" value="Uracil-DNA_glycosylase-like_sf"/>
</dbReference>
<dbReference type="NCBIfam" id="TIGR04274">
    <property type="entry name" value="hypoxanDNAglyco"/>
    <property type="match status" value="1"/>
</dbReference>
<dbReference type="Pfam" id="PF03167">
    <property type="entry name" value="UDG"/>
    <property type="match status" value="1"/>
</dbReference>
<dbReference type="SMART" id="SM00986">
    <property type="entry name" value="UDG"/>
    <property type="match status" value="1"/>
</dbReference>
<dbReference type="SMART" id="SM00987">
    <property type="entry name" value="UreE_C"/>
    <property type="match status" value="1"/>
</dbReference>
<dbReference type="SUPFAM" id="SSF52141">
    <property type="entry name" value="Uracil-DNA glycosylase-like"/>
    <property type="match status" value="1"/>
</dbReference>
<evidence type="ECO:0000269" key="1">
    <source>
    </source>
</evidence>
<evidence type="ECO:0000303" key="2">
    <source>
    </source>
</evidence>
<evidence type="ECO:0000305" key="3"/>
<evidence type="ECO:0000305" key="4">
    <source>
    </source>
</evidence>
<evidence type="ECO:0000312" key="5">
    <source>
        <dbReference type="EMBL" id="AAZ69715.1"/>
    </source>
</evidence>
<reference key="1">
    <citation type="journal article" date="2006" name="J. Bacteriol.">
        <title>The Methanosarcina barkeri genome: comparative analysis with Methanosarcina acetivorans and Methanosarcina mazei reveals extensive rearrangement within methanosarcinal genomes.</title>
        <authorList>
            <person name="Maeder D.L."/>
            <person name="Anderson I."/>
            <person name="Brettin T.S."/>
            <person name="Bruce D.C."/>
            <person name="Gilna P."/>
            <person name="Han C.S."/>
            <person name="Lapidus A."/>
            <person name="Metcalf W.W."/>
            <person name="Saunders E."/>
            <person name="Tapia R."/>
            <person name="Sowers K.R."/>
        </authorList>
    </citation>
    <scope>NUCLEOTIDE SEQUENCE [LARGE SCALE GENOMIC DNA]</scope>
    <source>
        <strain>Fusaro / DSM 804</strain>
    </source>
</reference>
<reference key="2">
    <citation type="journal article" date="2011" name="J. Biol. Chem.">
        <title>New family of deamination repair enzymes in uracil-DNA glycosylase superfamily.</title>
        <authorList>
            <person name="Lee H.W."/>
            <person name="Dominy B.N."/>
            <person name="Cao W."/>
        </authorList>
    </citation>
    <scope>FUNCTION</scope>
    <scope>CATALYTIC ACTIVITY</scope>
    <scope>ACTIVE SITE</scope>
    <scope>MUTAGENESIS OF ASN-39; ASP-74; ASP-86 AND ASN-113</scope>
</reference>
<proteinExistence type="evidence at protein level"/>
<gene>
    <name evidence="5" type="ordered locus">Mbar_A0737</name>
</gene>
<keyword id="KW-0227">DNA damage</keyword>
<keyword id="KW-0234">DNA repair</keyword>
<keyword id="KW-0378">Hydrolase</keyword>
<organism>
    <name type="scientific">Methanosarcina barkeri (strain Fusaro / DSM 804)</name>
    <dbReference type="NCBI Taxonomy" id="269797"/>
    <lineage>
        <taxon>Archaea</taxon>
        <taxon>Methanobacteriati</taxon>
        <taxon>Methanobacteriota</taxon>
        <taxon>Stenosarchaea group</taxon>
        <taxon>Methanomicrobia</taxon>
        <taxon>Methanosarcinales</taxon>
        <taxon>Methanosarcinaceae</taxon>
        <taxon>Methanosarcina</taxon>
    </lineage>
</organism>
<protein>
    <recommendedName>
        <fullName evidence="2">Hypoxanthine DNA glycosylase</fullName>
        <shortName evidence="2">HDG</shortName>
        <ecNumber evidence="1">3.2.2.-</ecNumber>
    </recommendedName>
</protein>
<feature type="chain" id="PRO_0000439190" description="Hypoxanthine DNA glycosylase">
    <location>
        <begin position="1"/>
        <end position="158"/>
    </location>
</feature>
<feature type="active site" evidence="4">
    <location>
        <position position="39"/>
    </location>
</feature>
<feature type="mutagenesis site" description="Abolishes the glycosylase activity." evidence="1">
    <original>N</original>
    <variation>A</variation>
    <location>
        <position position="39"/>
    </location>
</feature>
<feature type="mutagenesis site" description="Active only on the G/I substrate." evidence="1">
    <original>N</original>
    <variation>D</variation>
    <location>
        <position position="39"/>
    </location>
</feature>
<feature type="mutagenesis site" description="Retains significant activity on the G/I substrate, but negligible activity on the T/I substrate." evidence="1">
    <original>N</original>
    <variation>Q</variation>
    <location>
        <position position="39"/>
    </location>
</feature>
<feature type="mutagenesis site" description="Retains significant activity on the G/I substrate." evidence="1">
    <original>D</original>
    <variation>A</variation>
    <variation>N</variation>
    <location>
        <position position="74"/>
    </location>
</feature>
<feature type="mutagenesis site" description="Retains significant activity on the G/I substrate." evidence="1">
    <original>D</original>
    <variation>A</variation>
    <location>
        <position position="86"/>
    </location>
</feature>
<feature type="mutagenesis site" description="Retains significant activity on the G/I substrate." evidence="1">
    <original>N</original>
    <variation>A</variation>
    <location>
        <position position="113"/>
    </location>
</feature>
<accession>Q46EH7</accession>
<sequence length="158" mass="18012">MKKQGFPPVIDENTEILILGSLPGDVSIRKHQYYGHPGNDFWRLLGSIIGEDLQSINYQNRLEALKRNKIGLWDVFKAGKREGNEDTKIKDEEINQFSILKDMAPNLKLVLFNGKKSGEYEPILRAMGYETKILLSSSGANRRSLKSRKSGWAEAFKR</sequence>
<comment type="function">
    <text evidence="1">Excises hypoxanthine, a deamination product of adenine, from double-stranded DNA. Acts on double-stranded DNA containing G/I, T/I, A/I and C/I base pairs, but not on single-stranded inosine-containing DNA. Also has minor xanthine DNA glycosylase activity. Lacks any detectable uracil-DNA glycosylase activity.</text>
</comment>
<comment type="similarity">
    <text evidence="3">Belongs to the uracil-DNA glycosylase (UDG) superfamily. Type 6 (HDG) family.</text>
</comment>
<name>HDG_METBF</name>